<sequence>MWTGVNMDSSKRQFLQQLGVLTAGASLVPLAEAKFPFSPERHEGSPRHRYAMLIDLRRCIGCQSCTVSCTIENQTPQGAFRTTVNQYQVQREGSQEVTNVLLPRLCNHCDNPPCVPVCPVQATFQREDGIVVVDNKRCVGCAYCVQACPYDARFINHETQTADKCTFCVHRLEAGLLPACVESCVGGARIIGDIKDPHSRIATMLHQHRDAIKVLKPENGTSPHVFYLGLDDAFVTPLMGRAQPALWQEV</sequence>
<accession>Q7CQM9</accession>
<accession>Q7B2G3</accession>
<accession>Q7BK19</accession>
<dbReference type="EMBL" id="AJ224978">
    <property type="protein sequence ID" value="CAB37414.1"/>
    <property type="molecule type" value="Genomic_DNA"/>
</dbReference>
<dbReference type="EMBL" id="AF282268">
    <property type="protein sequence ID" value="AAG31757.1"/>
    <property type="molecule type" value="Genomic_DNA"/>
</dbReference>
<dbReference type="EMBL" id="AE006468">
    <property type="protein sequence ID" value="AAL20309.1"/>
    <property type="molecule type" value="Genomic_DNA"/>
</dbReference>
<dbReference type="RefSeq" id="NP_460350.1">
    <property type="nucleotide sequence ID" value="NC_003197.2"/>
</dbReference>
<dbReference type="RefSeq" id="WP_000269830.1">
    <property type="nucleotide sequence ID" value="NC_003197.2"/>
</dbReference>
<dbReference type="SMR" id="Q7CQM9"/>
<dbReference type="STRING" id="99287.STM1385"/>
<dbReference type="PaxDb" id="99287-STM1385"/>
<dbReference type="DNASU" id="1252903"/>
<dbReference type="GeneID" id="1252903"/>
<dbReference type="KEGG" id="stm:STM1385"/>
<dbReference type="PATRIC" id="fig|99287.12.peg.1468"/>
<dbReference type="HOGENOM" id="CLU_043374_1_3_6"/>
<dbReference type="OMA" id="VSCSMEN"/>
<dbReference type="PhylomeDB" id="Q7CQM9"/>
<dbReference type="BioCyc" id="MetaCyc:MONOMER-12550"/>
<dbReference type="BioCyc" id="SENT99287:STM1385-MONOMER"/>
<dbReference type="Proteomes" id="UP000001014">
    <property type="component" value="Chromosome"/>
</dbReference>
<dbReference type="GO" id="GO:0042597">
    <property type="term" value="C:periplasmic space"/>
    <property type="evidence" value="ECO:0007669"/>
    <property type="project" value="UniProtKB-SubCell"/>
</dbReference>
<dbReference type="GO" id="GO:0005886">
    <property type="term" value="C:plasma membrane"/>
    <property type="evidence" value="ECO:0007669"/>
    <property type="project" value="UniProtKB-SubCell"/>
</dbReference>
<dbReference type="GO" id="GO:0051539">
    <property type="term" value="F:4 iron, 4 sulfur cluster binding"/>
    <property type="evidence" value="ECO:0007669"/>
    <property type="project" value="UniProtKB-KW"/>
</dbReference>
<dbReference type="GO" id="GO:0046872">
    <property type="term" value="F:metal ion binding"/>
    <property type="evidence" value="ECO:0007669"/>
    <property type="project" value="UniProtKB-KW"/>
</dbReference>
<dbReference type="CDD" id="cd10551">
    <property type="entry name" value="PsrB"/>
    <property type="match status" value="1"/>
</dbReference>
<dbReference type="Gene3D" id="3.30.70.20">
    <property type="match status" value="2"/>
</dbReference>
<dbReference type="InterPro" id="IPR017896">
    <property type="entry name" value="4Fe4S_Fe-S-bd"/>
</dbReference>
<dbReference type="InterPro" id="IPR017900">
    <property type="entry name" value="4Fe4S_Fe_S_CS"/>
</dbReference>
<dbReference type="InterPro" id="IPR054822">
    <property type="entry name" value="DsrO-like"/>
</dbReference>
<dbReference type="InterPro" id="IPR050954">
    <property type="entry name" value="ET_IronSulfur_Cluster-Binding"/>
</dbReference>
<dbReference type="InterPro" id="IPR006311">
    <property type="entry name" value="TAT_signal"/>
</dbReference>
<dbReference type="NCBIfam" id="NF045797">
    <property type="entry name" value="DsrO"/>
    <property type="match status" value="1"/>
</dbReference>
<dbReference type="NCBIfam" id="NF011569">
    <property type="entry name" value="PRK14993.1"/>
    <property type="match status" value="1"/>
</dbReference>
<dbReference type="PANTHER" id="PTHR43177">
    <property type="entry name" value="PROTEIN NRFC"/>
    <property type="match status" value="1"/>
</dbReference>
<dbReference type="PANTHER" id="PTHR43177:SF9">
    <property type="entry name" value="PROTEIN NRFC"/>
    <property type="match status" value="1"/>
</dbReference>
<dbReference type="Pfam" id="PF13247">
    <property type="entry name" value="Fer4_11"/>
    <property type="match status" value="1"/>
</dbReference>
<dbReference type="SUPFAM" id="SSF54862">
    <property type="entry name" value="4Fe-4S ferredoxins"/>
    <property type="match status" value="1"/>
</dbReference>
<dbReference type="PROSITE" id="PS00198">
    <property type="entry name" value="4FE4S_FER_1"/>
    <property type="match status" value="1"/>
</dbReference>
<dbReference type="PROSITE" id="PS51379">
    <property type="entry name" value="4FE4S_FER_2"/>
    <property type="match status" value="3"/>
</dbReference>
<dbReference type="PROSITE" id="PS51318">
    <property type="entry name" value="TAT"/>
    <property type="match status" value="1"/>
</dbReference>
<protein>
    <recommendedName>
        <fullName>Tetrathionate reductase subunit B</fullName>
    </recommendedName>
    <alternativeName>
        <fullName>Tetrathionate reductase electron transport protein</fullName>
    </alternativeName>
</protein>
<gene>
    <name type="primary">ttrB</name>
    <name type="ordered locus">STM1385</name>
</gene>
<reference key="1">
    <citation type="journal article" date="1999" name="Mol. Microbiol.">
        <title>Molecular and functional analysis indicates a mosaic structure of Salmonella pathogenicity island 2.</title>
        <authorList>
            <person name="Hensel M."/>
            <person name="Egelseer C."/>
            <person name="Nikolaus T."/>
        </authorList>
    </citation>
    <scope>NUCLEOTIDE SEQUENCE [GENOMIC DNA]</scope>
    <source>
        <strain>LT2</strain>
    </source>
</reference>
<reference key="2">
    <citation type="journal article" date="2001" name="J. Bacteriol.">
        <title>The alternative electron acceptor tetrathionate supports B12-dependent anaerobic growth of Salmonella enterica serovar typhimurium on ethanolamine or 1,2-propanediol.</title>
        <authorList>
            <person name="Price-Carter M."/>
            <person name="Tingey J."/>
            <person name="Bobik T.A."/>
            <person name="Roth J.R."/>
        </authorList>
    </citation>
    <scope>NUCLEOTIDE SEQUENCE [GENOMIC DNA]</scope>
    <scope>INDUCTION</scope>
    <source>
        <strain>LT2</strain>
    </source>
</reference>
<reference key="3">
    <citation type="journal article" date="2001" name="Nature">
        <title>Complete genome sequence of Salmonella enterica serovar Typhimurium LT2.</title>
        <authorList>
            <person name="McClelland M."/>
            <person name="Sanderson K.E."/>
            <person name="Spieth J."/>
            <person name="Clifton S.W."/>
            <person name="Latreille P."/>
            <person name="Courtney L."/>
            <person name="Porwollik S."/>
            <person name="Ali J."/>
            <person name="Dante M."/>
            <person name="Du F."/>
            <person name="Hou S."/>
            <person name="Layman D."/>
            <person name="Leonard S."/>
            <person name="Nguyen C."/>
            <person name="Scott K."/>
            <person name="Holmes A."/>
            <person name="Grewal N."/>
            <person name="Mulvaney E."/>
            <person name="Ryan E."/>
            <person name="Sun H."/>
            <person name="Florea L."/>
            <person name="Miller W."/>
            <person name="Stoneking T."/>
            <person name="Nhan M."/>
            <person name="Waterston R."/>
            <person name="Wilson R.K."/>
        </authorList>
    </citation>
    <scope>NUCLEOTIDE SEQUENCE [LARGE SCALE GENOMIC DNA]</scope>
    <source>
        <strain>LT2 / SGSC1412 / ATCC 700720</strain>
    </source>
</reference>
<reference key="4">
    <citation type="journal article" date="1999" name="Mol. Microbiol.">
        <title>The genetic basis of tetrathionate respiration in Salmonella typhimurium.</title>
        <authorList>
            <person name="Hensel M."/>
            <person name="Hinsley A.P."/>
            <person name="Nikolaus T."/>
            <person name="Sawers G."/>
            <person name="Berks B.C."/>
        </authorList>
    </citation>
    <scope>FUNCTION</scope>
    <scope>SUBUNIT</scope>
    <scope>SUBCELLULAR LOCATION</scope>
    <scope>INDUCTION</scope>
    <source>
        <strain>LT2</strain>
    </source>
</reference>
<reference key="5">
    <citation type="journal article" date="2010" name="Nature">
        <title>Gut inflammation provides a respiratory electron acceptor for Salmonella.</title>
        <authorList>
            <person name="Winter S.E."/>
            <person name="Thiennimitr P."/>
            <person name="Winter M.G."/>
            <person name="Butler B.P."/>
            <person name="Huseby D.L."/>
            <person name="Crawford R.W."/>
            <person name="Russell J.M."/>
            <person name="Bevins C.L."/>
            <person name="Adams L.G."/>
            <person name="Tsolis R.M."/>
            <person name="Roth J.R."/>
            <person name="Baumler A.J."/>
        </authorList>
    </citation>
    <scope>FUNCTION IN VIRULENCE</scope>
</reference>
<proteinExistence type="evidence at protein level"/>
<comment type="function">
    <text evidence="4 6">Part of a membrane-bound tetrathionate reductase that catalyzes the reduction of tetrathionate to thiosulfate. TtrB is probably involved in transfer of electrons from TtrC to TtrA. During mice infection, the ability to use tetrathionate as an electron acceptor is a growth advantage for S.typhimurium over the competing microbiota in the lumen of the inflamed gut.</text>
</comment>
<comment type="subunit">
    <text evidence="4">Probably composed of three subunits: TtrA, TtrB and TtrC.</text>
</comment>
<comment type="subcellular location">
    <subcellularLocation>
        <location evidence="4">Periplasm</location>
    </subcellularLocation>
    <subcellularLocation>
        <location evidence="7">Cell inner membrane</location>
        <topology evidence="7">Peripheral membrane protein</topology>
        <orientation evidence="7">Periplasmic side</orientation>
    </subcellularLocation>
</comment>
<comment type="induction">
    <text evidence="4 5">Transcriptionally regulated by Fnr and by the TtrR/TtrS two-component regulatory system.</text>
</comment>
<comment type="PTM">
    <text>Predicted to be exported by the Tat system. The position of the signal peptide cleavage has not been experimentally proven.</text>
</comment>
<evidence type="ECO:0000250" key="1"/>
<evidence type="ECO:0000255" key="2">
    <source>
        <dbReference type="PROSITE-ProRule" id="PRU00648"/>
    </source>
</evidence>
<evidence type="ECO:0000255" key="3">
    <source>
        <dbReference type="PROSITE-ProRule" id="PRU00711"/>
    </source>
</evidence>
<evidence type="ECO:0000269" key="4">
    <source>
    </source>
</evidence>
<evidence type="ECO:0000269" key="5">
    <source>
    </source>
</evidence>
<evidence type="ECO:0000269" key="6">
    <source>
    </source>
</evidence>
<evidence type="ECO:0000305" key="7">
    <source>
    </source>
</evidence>
<feature type="signal peptide" description="Tat-type signal" evidence="2">
    <location>
        <begin position="1"/>
        <end position="33"/>
    </location>
</feature>
<feature type="chain" id="PRO_0000417418" description="Tetrathionate reductase subunit B">
    <location>
        <begin position="34"/>
        <end position="250"/>
    </location>
</feature>
<feature type="domain" description="4Fe-4S ferredoxin-type 1" evidence="3">
    <location>
        <begin position="50"/>
        <end position="79"/>
    </location>
</feature>
<feature type="domain" description="4Fe-4S ferredoxin-type 2" evidence="3">
    <location>
        <begin position="97"/>
        <end position="128"/>
    </location>
</feature>
<feature type="domain" description="4Fe-4S ferredoxin-type 3" evidence="3">
    <location>
        <begin position="129"/>
        <end position="158"/>
    </location>
</feature>
<feature type="binding site" evidence="1">
    <location>
        <position position="59"/>
    </location>
    <ligand>
        <name>[4Fe-4S] cluster</name>
        <dbReference type="ChEBI" id="CHEBI:49883"/>
        <label>1</label>
    </ligand>
</feature>
<feature type="binding site" evidence="1">
    <location>
        <position position="62"/>
    </location>
    <ligand>
        <name>[4Fe-4S] cluster</name>
        <dbReference type="ChEBI" id="CHEBI:49883"/>
        <label>1</label>
    </ligand>
</feature>
<feature type="binding site" evidence="1">
    <location>
        <position position="65"/>
    </location>
    <ligand>
        <name>[4Fe-4S] cluster</name>
        <dbReference type="ChEBI" id="CHEBI:49883"/>
        <label>1</label>
    </ligand>
</feature>
<feature type="binding site" evidence="1">
    <location>
        <position position="69"/>
    </location>
    <ligand>
        <name>[4Fe-4S] cluster</name>
        <dbReference type="ChEBI" id="CHEBI:49883"/>
        <label>2</label>
    </ligand>
</feature>
<feature type="binding site" evidence="1">
    <location>
        <position position="106"/>
    </location>
    <ligand>
        <name>[4Fe-4S] cluster</name>
        <dbReference type="ChEBI" id="CHEBI:49883"/>
        <label>3</label>
    </ligand>
</feature>
<feature type="binding site" evidence="1">
    <location>
        <position position="109"/>
    </location>
    <ligand>
        <name>[4Fe-4S] cluster</name>
        <dbReference type="ChEBI" id="CHEBI:49883"/>
        <label>3</label>
    </ligand>
</feature>
<feature type="binding site" evidence="1">
    <location>
        <position position="114"/>
    </location>
    <ligand>
        <name>[4Fe-4S] cluster</name>
        <dbReference type="ChEBI" id="CHEBI:49883"/>
        <label>3</label>
    </ligand>
</feature>
<feature type="binding site" evidence="1">
    <location>
        <position position="118"/>
    </location>
    <ligand>
        <name>[4Fe-4S] cluster</name>
        <dbReference type="ChEBI" id="CHEBI:49883"/>
        <label>4</label>
    </ligand>
</feature>
<feature type="binding site" evidence="1">
    <location>
        <position position="138"/>
    </location>
    <ligand>
        <name>[4Fe-4S] cluster</name>
        <dbReference type="ChEBI" id="CHEBI:49883"/>
        <label>4</label>
    </ligand>
</feature>
<feature type="binding site" evidence="1">
    <location>
        <position position="141"/>
    </location>
    <ligand>
        <name>[4Fe-4S] cluster</name>
        <dbReference type="ChEBI" id="CHEBI:49883"/>
        <label>4</label>
    </ligand>
</feature>
<feature type="binding site" evidence="1">
    <location>
        <position position="144"/>
    </location>
    <ligand>
        <name>[4Fe-4S] cluster</name>
        <dbReference type="ChEBI" id="CHEBI:49883"/>
        <label>4</label>
    </ligand>
</feature>
<feature type="binding site" evidence="1">
    <location>
        <position position="148"/>
    </location>
    <ligand>
        <name>[4Fe-4S] cluster</name>
        <dbReference type="ChEBI" id="CHEBI:49883"/>
        <label>3</label>
    </ligand>
</feature>
<feature type="binding site" evidence="1">
    <location>
        <position position="165"/>
    </location>
    <ligand>
        <name>[4Fe-4S] cluster</name>
        <dbReference type="ChEBI" id="CHEBI:49883"/>
        <label>2</label>
    </ligand>
</feature>
<feature type="binding site" evidence="1">
    <location>
        <position position="168"/>
    </location>
    <ligand>
        <name>[4Fe-4S] cluster</name>
        <dbReference type="ChEBI" id="CHEBI:49883"/>
        <label>2</label>
    </ligand>
</feature>
<feature type="binding site" evidence="1">
    <location>
        <position position="180"/>
    </location>
    <ligand>
        <name>[4Fe-4S] cluster</name>
        <dbReference type="ChEBI" id="CHEBI:49883"/>
        <label>2</label>
    </ligand>
</feature>
<feature type="binding site" evidence="1">
    <location>
        <position position="184"/>
    </location>
    <ligand>
        <name>[4Fe-4S] cluster</name>
        <dbReference type="ChEBI" id="CHEBI:49883"/>
        <label>1</label>
    </ligand>
</feature>
<name>TTRB_SALTY</name>
<keyword id="KW-0004">4Fe-4S</keyword>
<keyword id="KW-0997">Cell inner membrane</keyword>
<keyword id="KW-1003">Cell membrane</keyword>
<keyword id="KW-0249">Electron transport</keyword>
<keyword id="KW-0408">Iron</keyword>
<keyword id="KW-0411">Iron-sulfur</keyword>
<keyword id="KW-0472">Membrane</keyword>
<keyword id="KW-0479">Metal-binding</keyword>
<keyword id="KW-0574">Periplasm</keyword>
<keyword id="KW-1185">Reference proteome</keyword>
<keyword id="KW-0677">Repeat</keyword>
<keyword id="KW-0732">Signal</keyword>
<keyword id="KW-0813">Transport</keyword>
<organism>
    <name type="scientific">Salmonella typhimurium (strain LT2 / SGSC1412 / ATCC 700720)</name>
    <dbReference type="NCBI Taxonomy" id="99287"/>
    <lineage>
        <taxon>Bacteria</taxon>
        <taxon>Pseudomonadati</taxon>
        <taxon>Pseudomonadota</taxon>
        <taxon>Gammaproteobacteria</taxon>
        <taxon>Enterobacterales</taxon>
        <taxon>Enterobacteriaceae</taxon>
        <taxon>Salmonella</taxon>
    </lineage>
</organism>